<reference key="1">
    <citation type="submission" date="2004-11" db="EMBL/GenBank/DDBJ databases">
        <authorList>
            <consortium name="The German cDNA consortium"/>
        </authorList>
    </citation>
    <scope>NUCLEOTIDE SEQUENCE [LARGE SCALE MRNA]</scope>
    <source>
        <tissue>Brain cortex</tissue>
    </source>
</reference>
<protein>
    <recommendedName>
        <fullName>Protein tyrosine phosphatase type IVA 1</fullName>
        <ecNumber evidence="3">3.1.3.48</ecNumber>
    </recommendedName>
    <alternativeName>
        <fullName>Protein-tyrosine phosphatase 4a1</fullName>
    </alternativeName>
    <alternativeName>
        <fullName>Protein-tyrosine phosphatase of regenerating liver 1</fullName>
        <shortName>PRL-1</shortName>
    </alternativeName>
</protein>
<keyword id="KW-0131">Cell cycle</keyword>
<keyword id="KW-1003">Cell membrane</keyword>
<keyword id="KW-0963">Cytoplasm</keyword>
<keyword id="KW-0206">Cytoskeleton</keyword>
<keyword id="KW-0217">Developmental protein</keyword>
<keyword id="KW-1015">Disulfide bond</keyword>
<keyword id="KW-0256">Endoplasmic reticulum</keyword>
<keyword id="KW-0967">Endosome</keyword>
<keyword id="KW-0378">Hydrolase</keyword>
<keyword id="KW-0449">Lipoprotein</keyword>
<keyword id="KW-0472">Membrane</keyword>
<keyword id="KW-0488">Methylation</keyword>
<keyword id="KW-0539">Nucleus</keyword>
<keyword id="KW-0636">Prenylation</keyword>
<keyword id="KW-0904">Protein phosphatase</keyword>
<keyword id="KW-1185">Reference proteome</keyword>
<feature type="chain" id="PRO_0000094783" description="Protein tyrosine phosphatase type IVA 1">
    <location>
        <begin position="1"/>
        <end position="170"/>
    </location>
</feature>
<feature type="propeptide" id="PRO_0000396729" description="Removed in mature form" evidence="1">
    <location>
        <begin position="171"/>
        <end position="173"/>
    </location>
</feature>
<feature type="domain" description="Tyrosine-protein phosphatase" evidence="4">
    <location>
        <begin position="8"/>
        <end position="161"/>
    </location>
</feature>
<feature type="region of interest" description="Interaction with ATF5" evidence="1">
    <location>
        <begin position="97"/>
        <end position="132"/>
    </location>
</feature>
<feature type="active site" description="Proton donor" evidence="1">
    <location>
        <position position="72"/>
    </location>
</feature>
<feature type="active site" description="Phosphocysteine intermediate" evidence="4">
    <location>
        <position position="104"/>
    </location>
</feature>
<feature type="binding site" evidence="1">
    <location>
        <begin position="105"/>
        <end position="110"/>
    </location>
    <ligand>
        <name>phosphate</name>
        <dbReference type="ChEBI" id="CHEBI:43474"/>
    </ligand>
</feature>
<feature type="binding site" evidence="1">
    <location>
        <position position="110"/>
    </location>
    <ligand>
        <name>substrate</name>
    </ligand>
</feature>
<feature type="modified residue" description="Cysteine methyl ester" evidence="1">
    <location>
        <position position="170"/>
    </location>
</feature>
<feature type="lipid moiety-binding region" description="S-farnesyl cysteine" evidence="1">
    <location>
        <position position="170"/>
    </location>
</feature>
<feature type="disulfide bond" evidence="1">
    <location>
        <begin position="49"/>
        <end position="104"/>
    </location>
</feature>
<accession>Q5R7J8</accession>
<sequence>MARMNRPAPVEVTYKNMRFLITHNPTNATLNKFIEELKKYGVTTIVRVCEATYDTALVEKEGIHVLDWPFDDGAPPSNQIVDGWLSLVKIKFREEPGCCIAVHCVAGLGRAPVLVALALIEGGMKYEDAVQFIRQKRRGAFNSKQLLYLEKYRPKMRLRFKDSNGHRNNCCIQ</sequence>
<dbReference type="EC" id="3.1.3.48" evidence="3"/>
<dbReference type="EMBL" id="CR860117">
    <property type="protein sequence ID" value="CAH92262.1"/>
    <property type="molecule type" value="mRNA"/>
</dbReference>
<dbReference type="RefSeq" id="NP_001126324.1">
    <property type="nucleotide sequence ID" value="NM_001132852.1"/>
</dbReference>
<dbReference type="BMRB" id="Q5R7J8"/>
<dbReference type="SMR" id="Q5R7J8"/>
<dbReference type="STRING" id="9601.ENSPPYP00000018734"/>
<dbReference type="GeneID" id="100173305"/>
<dbReference type="KEGG" id="pon:100173305"/>
<dbReference type="CTD" id="7803"/>
<dbReference type="eggNOG" id="KOG2836">
    <property type="taxonomic scope" value="Eukaryota"/>
</dbReference>
<dbReference type="InParanoid" id="Q5R7J8"/>
<dbReference type="OrthoDB" id="5632at2759"/>
<dbReference type="Proteomes" id="UP000001595">
    <property type="component" value="Unplaced"/>
</dbReference>
<dbReference type="GO" id="GO:0005769">
    <property type="term" value="C:early endosome"/>
    <property type="evidence" value="ECO:0007669"/>
    <property type="project" value="UniProtKB-SubCell"/>
</dbReference>
<dbReference type="GO" id="GO:0005783">
    <property type="term" value="C:endoplasmic reticulum"/>
    <property type="evidence" value="ECO:0007669"/>
    <property type="project" value="UniProtKB-SubCell"/>
</dbReference>
<dbReference type="GO" id="GO:0005634">
    <property type="term" value="C:nucleus"/>
    <property type="evidence" value="ECO:0007669"/>
    <property type="project" value="UniProtKB-SubCell"/>
</dbReference>
<dbReference type="GO" id="GO:0005886">
    <property type="term" value="C:plasma membrane"/>
    <property type="evidence" value="ECO:0007669"/>
    <property type="project" value="UniProtKB-SubCell"/>
</dbReference>
<dbReference type="GO" id="GO:0005819">
    <property type="term" value="C:spindle"/>
    <property type="evidence" value="ECO:0007669"/>
    <property type="project" value="UniProtKB-SubCell"/>
</dbReference>
<dbReference type="GO" id="GO:0004725">
    <property type="term" value="F:protein tyrosine phosphatase activity"/>
    <property type="evidence" value="ECO:0007669"/>
    <property type="project" value="UniProtKB-EC"/>
</dbReference>
<dbReference type="CDD" id="cd18537">
    <property type="entry name" value="PTP-IVa1"/>
    <property type="match status" value="1"/>
</dbReference>
<dbReference type="FunFam" id="3.90.190.10:FF:000012">
    <property type="entry name" value="protein tyrosine phosphatase type IVA 1"/>
    <property type="match status" value="1"/>
</dbReference>
<dbReference type="Gene3D" id="3.90.190.10">
    <property type="entry name" value="Protein tyrosine phosphatase superfamily"/>
    <property type="match status" value="1"/>
</dbReference>
<dbReference type="InterPro" id="IPR029021">
    <property type="entry name" value="Prot-tyrosine_phosphatase-like"/>
</dbReference>
<dbReference type="InterPro" id="IPR050561">
    <property type="entry name" value="PTP"/>
</dbReference>
<dbReference type="InterPro" id="IPR057023">
    <property type="entry name" value="PTP-SAK"/>
</dbReference>
<dbReference type="InterPro" id="IPR003595">
    <property type="entry name" value="Tyr_Pase_cat"/>
</dbReference>
<dbReference type="InterPro" id="IPR000387">
    <property type="entry name" value="Tyr_Pase_dom"/>
</dbReference>
<dbReference type="InterPro" id="IPR020422">
    <property type="entry name" value="TYR_PHOSPHATASE_DUAL_dom"/>
</dbReference>
<dbReference type="PANTHER" id="PTHR23339">
    <property type="entry name" value="TYROSINE SPECIFIC PROTEIN PHOSPHATASE AND DUAL SPECIFICITY PROTEIN PHOSPHATASE"/>
    <property type="match status" value="1"/>
</dbReference>
<dbReference type="Pfam" id="PF22784">
    <property type="entry name" value="PTP-SAK"/>
    <property type="match status" value="1"/>
</dbReference>
<dbReference type="SMART" id="SM00404">
    <property type="entry name" value="PTPc_motif"/>
    <property type="match status" value="1"/>
</dbReference>
<dbReference type="SUPFAM" id="SSF52799">
    <property type="entry name" value="(Phosphotyrosine protein) phosphatases II"/>
    <property type="match status" value="1"/>
</dbReference>
<dbReference type="PROSITE" id="PS50056">
    <property type="entry name" value="TYR_PHOSPHATASE_2"/>
    <property type="match status" value="1"/>
</dbReference>
<dbReference type="PROSITE" id="PS50054">
    <property type="entry name" value="TYR_PHOSPHATASE_DUAL"/>
    <property type="match status" value="1"/>
</dbReference>
<organism>
    <name type="scientific">Pongo abelii</name>
    <name type="common">Sumatran orangutan</name>
    <name type="synonym">Pongo pygmaeus abelii</name>
    <dbReference type="NCBI Taxonomy" id="9601"/>
    <lineage>
        <taxon>Eukaryota</taxon>
        <taxon>Metazoa</taxon>
        <taxon>Chordata</taxon>
        <taxon>Craniata</taxon>
        <taxon>Vertebrata</taxon>
        <taxon>Euteleostomi</taxon>
        <taxon>Mammalia</taxon>
        <taxon>Eutheria</taxon>
        <taxon>Euarchontoglires</taxon>
        <taxon>Primates</taxon>
        <taxon>Haplorrhini</taxon>
        <taxon>Catarrhini</taxon>
        <taxon>Hominidae</taxon>
        <taxon>Pongo</taxon>
    </lineage>
</organism>
<evidence type="ECO:0000250" key="1"/>
<evidence type="ECO:0000250" key="2">
    <source>
        <dbReference type="UniProtKB" id="Q78EG7"/>
    </source>
</evidence>
<evidence type="ECO:0000250" key="3">
    <source>
        <dbReference type="UniProtKB" id="Q93096"/>
    </source>
</evidence>
<evidence type="ECO:0000255" key="4">
    <source>
        <dbReference type="PROSITE-ProRule" id="PRU00160"/>
    </source>
</evidence>
<evidence type="ECO:0000305" key="5"/>
<proteinExistence type="evidence at transcript level"/>
<name>TP4A1_PONAB</name>
<comment type="function">
    <text evidence="1">Protein tyrosine phosphatase which stimulates progression from G1 into S phase during mitosis. May play a role in the development and maintenance of differentiating epithelial tissues (By similarity).</text>
</comment>
<comment type="catalytic activity">
    <reaction evidence="3">
        <text>O-phospho-L-tyrosyl-[protein] + H2O = L-tyrosyl-[protein] + phosphate</text>
        <dbReference type="Rhea" id="RHEA:10684"/>
        <dbReference type="Rhea" id="RHEA-COMP:10136"/>
        <dbReference type="Rhea" id="RHEA-COMP:20101"/>
        <dbReference type="ChEBI" id="CHEBI:15377"/>
        <dbReference type="ChEBI" id="CHEBI:43474"/>
        <dbReference type="ChEBI" id="CHEBI:46858"/>
        <dbReference type="ChEBI" id="CHEBI:61978"/>
        <dbReference type="EC" id="3.1.3.48"/>
    </reaction>
</comment>
<comment type="activity regulation">
    <text evidence="1">Inhibited by sodium orthovanadate and pentamidine.</text>
</comment>
<comment type="subunit">
    <text evidence="1">Homotrimer. Interacts with ATF5 and tubulin (By similarity).</text>
</comment>
<comment type="subcellular location">
    <subcellularLocation>
        <location evidence="3">Cell membrane</location>
        <topology evidence="3">Lipid-anchor</topology>
    </subcellularLocation>
    <subcellularLocation>
        <location evidence="3">Early endosome</location>
    </subcellularLocation>
    <subcellularLocation>
        <location evidence="3">Endoplasmic reticulum</location>
    </subcellularLocation>
    <subcellularLocation>
        <location evidence="3">Cytoplasm</location>
    </subcellularLocation>
    <subcellularLocation>
        <location evidence="3">Cytoplasm</location>
        <location evidence="3">Cytoskeleton</location>
        <location evidence="3">Spindle</location>
    </subcellularLocation>
    <subcellularLocation>
        <location evidence="2">Nucleus</location>
    </subcellularLocation>
    <text evidence="3">And mitotic spindle.</text>
</comment>
<comment type="PTM">
    <text evidence="1">Farnesylated. Farnesylation is required for membrane targeting (By similarity).</text>
</comment>
<comment type="similarity">
    <text evidence="5">Belongs to the protein-tyrosine phosphatase family.</text>
</comment>
<gene>
    <name type="primary">PTP4A1</name>
    <name type="synonym">PRL1</name>
</gene>